<comment type="function">
    <text evidence="1">Catalyzes the last two sequential reactions in the de novo biosynthetic pathway for UDP-N-acetylglucosamine (UDP-GlcNAc). The C-terminal domain catalyzes the transfer of acetyl group from acetyl coenzyme A to glucosamine-1-phosphate (GlcN-1-P) to produce N-acetylglucosamine-1-phosphate (GlcNAc-1-P), which is converted into UDP-GlcNAc by the transfer of uridine 5-monophosphate (from uridine 5-triphosphate), a reaction catalyzed by the N-terminal domain.</text>
</comment>
<comment type="catalytic activity">
    <reaction evidence="1">
        <text>alpha-D-glucosamine 1-phosphate + acetyl-CoA = N-acetyl-alpha-D-glucosamine 1-phosphate + CoA + H(+)</text>
        <dbReference type="Rhea" id="RHEA:13725"/>
        <dbReference type="ChEBI" id="CHEBI:15378"/>
        <dbReference type="ChEBI" id="CHEBI:57287"/>
        <dbReference type="ChEBI" id="CHEBI:57288"/>
        <dbReference type="ChEBI" id="CHEBI:57776"/>
        <dbReference type="ChEBI" id="CHEBI:58516"/>
        <dbReference type="EC" id="2.3.1.157"/>
    </reaction>
</comment>
<comment type="catalytic activity">
    <reaction evidence="1">
        <text>N-acetyl-alpha-D-glucosamine 1-phosphate + UTP + H(+) = UDP-N-acetyl-alpha-D-glucosamine + diphosphate</text>
        <dbReference type="Rhea" id="RHEA:13509"/>
        <dbReference type="ChEBI" id="CHEBI:15378"/>
        <dbReference type="ChEBI" id="CHEBI:33019"/>
        <dbReference type="ChEBI" id="CHEBI:46398"/>
        <dbReference type="ChEBI" id="CHEBI:57705"/>
        <dbReference type="ChEBI" id="CHEBI:57776"/>
        <dbReference type="EC" id="2.7.7.23"/>
    </reaction>
</comment>
<comment type="cofactor">
    <cofactor evidence="1">
        <name>Mg(2+)</name>
        <dbReference type="ChEBI" id="CHEBI:18420"/>
    </cofactor>
    <text evidence="1">Binds 1 Mg(2+) ion per subunit.</text>
</comment>
<comment type="pathway">
    <text evidence="1">Nucleotide-sugar biosynthesis; UDP-N-acetyl-alpha-D-glucosamine biosynthesis; N-acetyl-alpha-D-glucosamine 1-phosphate from alpha-D-glucosamine 6-phosphate (route II): step 2/2.</text>
</comment>
<comment type="pathway">
    <text evidence="1">Nucleotide-sugar biosynthesis; UDP-N-acetyl-alpha-D-glucosamine biosynthesis; UDP-N-acetyl-alpha-D-glucosamine from N-acetyl-alpha-D-glucosamine 1-phosphate: step 1/1.</text>
</comment>
<comment type="pathway">
    <text evidence="1">Bacterial outer membrane biogenesis; LPS lipid A biosynthesis.</text>
</comment>
<comment type="subunit">
    <text evidence="1">Homotrimer.</text>
</comment>
<comment type="subcellular location">
    <subcellularLocation>
        <location evidence="1">Cytoplasm</location>
    </subcellularLocation>
</comment>
<comment type="similarity">
    <text evidence="1">In the N-terminal section; belongs to the N-acetylglucosamine-1-phosphate uridyltransferase family.</text>
</comment>
<comment type="similarity">
    <text evidence="1">In the C-terminal section; belongs to the transferase hexapeptide repeat family.</text>
</comment>
<dbReference type="EC" id="2.7.7.23" evidence="1"/>
<dbReference type="EC" id="2.3.1.157" evidence="1"/>
<dbReference type="EMBL" id="CP000570">
    <property type="protein sequence ID" value="ABN81895.1"/>
    <property type="molecule type" value="Genomic_DNA"/>
</dbReference>
<dbReference type="RefSeq" id="WP_004190034.1">
    <property type="nucleotide sequence ID" value="NC_009074.1"/>
</dbReference>
<dbReference type="SMR" id="A3N4V7"/>
<dbReference type="GeneID" id="92981044"/>
<dbReference type="KEGG" id="bpd:BURPS668_0324"/>
<dbReference type="HOGENOM" id="CLU_029499_15_2_4"/>
<dbReference type="UniPathway" id="UPA00113">
    <property type="reaction ID" value="UER00532"/>
</dbReference>
<dbReference type="UniPathway" id="UPA00113">
    <property type="reaction ID" value="UER00533"/>
</dbReference>
<dbReference type="UniPathway" id="UPA00973"/>
<dbReference type="GO" id="GO:0005737">
    <property type="term" value="C:cytoplasm"/>
    <property type="evidence" value="ECO:0007669"/>
    <property type="project" value="UniProtKB-SubCell"/>
</dbReference>
<dbReference type="GO" id="GO:0016020">
    <property type="term" value="C:membrane"/>
    <property type="evidence" value="ECO:0007669"/>
    <property type="project" value="GOC"/>
</dbReference>
<dbReference type="GO" id="GO:0019134">
    <property type="term" value="F:glucosamine-1-phosphate N-acetyltransferase activity"/>
    <property type="evidence" value="ECO:0007669"/>
    <property type="project" value="UniProtKB-UniRule"/>
</dbReference>
<dbReference type="GO" id="GO:0000287">
    <property type="term" value="F:magnesium ion binding"/>
    <property type="evidence" value="ECO:0007669"/>
    <property type="project" value="UniProtKB-UniRule"/>
</dbReference>
<dbReference type="GO" id="GO:0003977">
    <property type="term" value="F:UDP-N-acetylglucosamine diphosphorylase activity"/>
    <property type="evidence" value="ECO:0007669"/>
    <property type="project" value="UniProtKB-UniRule"/>
</dbReference>
<dbReference type="GO" id="GO:0000902">
    <property type="term" value="P:cell morphogenesis"/>
    <property type="evidence" value="ECO:0007669"/>
    <property type="project" value="UniProtKB-UniRule"/>
</dbReference>
<dbReference type="GO" id="GO:0071555">
    <property type="term" value="P:cell wall organization"/>
    <property type="evidence" value="ECO:0007669"/>
    <property type="project" value="UniProtKB-KW"/>
</dbReference>
<dbReference type="GO" id="GO:0009245">
    <property type="term" value="P:lipid A biosynthetic process"/>
    <property type="evidence" value="ECO:0007669"/>
    <property type="project" value="UniProtKB-UniRule"/>
</dbReference>
<dbReference type="GO" id="GO:0009252">
    <property type="term" value="P:peptidoglycan biosynthetic process"/>
    <property type="evidence" value="ECO:0007669"/>
    <property type="project" value="UniProtKB-UniRule"/>
</dbReference>
<dbReference type="GO" id="GO:0008360">
    <property type="term" value="P:regulation of cell shape"/>
    <property type="evidence" value="ECO:0007669"/>
    <property type="project" value="UniProtKB-KW"/>
</dbReference>
<dbReference type="GO" id="GO:0006048">
    <property type="term" value="P:UDP-N-acetylglucosamine biosynthetic process"/>
    <property type="evidence" value="ECO:0007669"/>
    <property type="project" value="UniProtKB-UniPathway"/>
</dbReference>
<dbReference type="CDD" id="cd02540">
    <property type="entry name" value="GT2_GlmU_N_bac"/>
    <property type="match status" value="1"/>
</dbReference>
<dbReference type="CDD" id="cd03353">
    <property type="entry name" value="LbH_GlmU_C"/>
    <property type="match status" value="1"/>
</dbReference>
<dbReference type="Gene3D" id="2.160.10.10">
    <property type="entry name" value="Hexapeptide repeat proteins"/>
    <property type="match status" value="1"/>
</dbReference>
<dbReference type="Gene3D" id="3.90.550.10">
    <property type="entry name" value="Spore Coat Polysaccharide Biosynthesis Protein SpsA, Chain A"/>
    <property type="match status" value="1"/>
</dbReference>
<dbReference type="HAMAP" id="MF_01631">
    <property type="entry name" value="GlmU"/>
    <property type="match status" value="1"/>
</dbReference>
<dbReference type="InterPro" id="IPR005882">
    <property type="entry name" value="Bifunctional_GlmU"/>
</dbReference>
<dbReference type="InterPro" id="IPR050065">
    <property type="entry name" value="GlmU-like"/>
</dbReference>
<dbReference type="InterPro" id="IPR038009">
    <property type="entry name" value="GlmU_C_LbH"/>
</dbReference>
<dbReference type="InterPro" id="IPR001451">
    <property type="entry name" value="Hexapep"/>
</dbReference>
<dbReference type="InterPro" id="IPR025877">
    <property type="entry name" value="MobA-like_NTP_Trfase"/>
</dbReference>
<dbReference type="InterPro" id="IPR029044">
    <property type="entry name" value="Nucleotide-diphossugar_trans"/>
</dbReference>
<dbReference type="InterPro" id="IPR011004">
    <property type="entry name" value="Trimer_LpxA-like_sf"/>
</dbReference>
<dbReference type="NCBIfam" id="TIGR01173">
    <property type="entry name" value="glmU"/>
    <property type="match status" value="1"/>
</dbReference>
<dbReference type="PANTHER" id="PTHR43584:SF3">
    <property type="entry name" value="BIFUNCTIONAL PROTEIN GLMU"/>
    <property type="match status" value="1"/>
</dbReference>
<dbReference type="PANTHER" id="PTHR43584">
    <property type="entry name" value="NUCLEOTIDYL TRANSFERASE"/>
    <property type="match status" value="1"/>
</dbReference>
<dbReference type="Pfam" id="PF00132">
    <property type="entry name" value="Hexapep"/>
    <property type="match status" value="2"/>
</dbReference>
<dbReference type="Pfam" id="PF12804">
    <property type="entry name" value="NTP_transf_3"/>
    <property type="match status" value="1"/>
</dbReference>
<dbReference type="SUPFAM" id="SSF53448">
    <property type="entry name" value="Nucleotide-diphospho-sugar transferases"/>
    <property type="match status" value="1"/>
</dbReference>
<dbReference type="SUPFAM" id="SSF51161">
    <property type="entry name" value="Trimeric LpxA-like enzymes"/>
    <property type="match status" value="1"/>
</dbReference>
<accession>A3N4V7</accession>
<sequence length="453" mass="47580">MNIVILAAGTGKRMRSALPKVLHPLAGRPLLSHVIDTARALAPSRLVVVIGHGAEQVRAAVAAPDVQFAVQEQQLGTGHAVRQALPLLDPSQPTLVLYGDVPLTRTATLKRLADAATDARYGVLTVTLDDPTGYGRIVRDQAGCVTRIVEQKDASPDELRIDEINTGIVVAPTAQLSMWLGALGNDNAQGEYYLTDVVEQAIEAGFEIVTTQPDDEWETLGVNSKAQLAELERIHQRNLADALLAAGVTLADPARIDVRGTLACGRDVSIDVNCVFEGDVTLADGVTIGANCVIRHAAIAAGARVDAFSHLDGATVGANAVVGPYARLRPGAVLAADAHVGNFVEVKNATLGQGSKANHLTYLGDADIGARVNVGAGTITCNYDGANKFRTVIEDDVFVGSDTQFVAPVRVGRGVTVAAGTTVWKDVAADMLVLNDKTQTAKSGYVRPVKKKS</sequence>
<evidence type="ECO:0000255" key="1">
    <source>
        <dbReference type="HAMAP-Rule" id="MF_01631"/>
    </source>
</evidence>
<organism>
    <name type="scientific">Burkholderia pseudomallei (strain 668)</name>
    <dbReference type="NCBI Taxonomy" id="320373"/>
    <lineage>
        <taxon>Bacteria</taxon>
        <taxon>Pseudomonadati</taxon>
        <taxon>Pseudomonadota</taxon>
        <taxon>Betaproteobacteria</taxon>
        <taxon>Burkholderiales</taxon>
        <taxon>Burkholderiaceae</taxon>
        <taxon>Burkholderia</taxon>
        <taxon>pseudomallei group</taxon>
    </lineage>
</organism>
<name>GLMU_BURP6</name>
<proteinExistence type="inferred from homology"/>
<gene>
    <name evidence="1" type="primary">glmU</name>
    <name type="ordered locus">BURPS668_0324</name>
</gene>
<feature type="chain" id="PRO_1000056145" description="Bifunctional protein GlmU">
    <location>
        <begin position="1"/>
        <end position="453"/>
    </location>
</feature>
<feature type="region of interest" description="Pyrophosphorylase" evidence="1">
    <location>
        <begin position="1"/>
        <end position="225"/>
    </location>
</feature>
<feature type="region of interest" description="Linker" evidence="1">
    <location>
        <begin position="226"/>
        <end position="246"/>
    </location>
</feature>
<feature type="region of interest" description="N-acetyltransferase" evidence="1">
    <location>
        <begin position="247"/>
        <end position="453"/>
    </location>
</feature>
<feature type="active site" description="Proton acceptor" evidence="1">
    <location>
        <position position="359"/>
    </location>
</feature>
<feature type="binding site" evidence="1">
    <location>
        <begin position="6"/>
        <end position="9"/>
    </location>
    <ligand>
        <name>UDP-N-acetyl-alpha-D-glucosamine</name>
        <dbReference type="ChEBI" id="CHEBI:57705"/>
    </ligand>
</feature>
<feature type="binding site" evidence="1">
    <location>
        <position position="20"/>
    </location>
    <ligand>
        <name>UDP-N-acetyl-alpha-D-glucosamine</name>
        <dbReference type="ChEBI" id="CHEBI:57705"/>
    </ligand>
</feature>
<feature type="binding site" evidence="1">
    <location>
        <position position="71"/>
    </location>
    <ligand>
        <name>UDP-N-acetyl-alpha-D-glucosamine</name>
        <dbReference type="ChEBI" id="CHEBI:57705"/>
    </ligand>
</feature>
<feature type="binding site" evidence="1">
    <location>
        <begin position="76"/>
        <end position="77"/>
    </location>
    <ligand>
        <name>UDP-N-acetyl-alpha-D-glucosamine</name>
        <dbReference type="ChEBI" id="CHEBI:57705"/>
    </ligand>
</feature>
<feature type="binding site" evidence="1">
    <location>
        <begin position="98"/>
        <end position="100"/>
    </location>
    <ligand>
        <name>UDP-N-acetyl-alpha-D-glucosamine</name>
        <dbReference type="ChEBI" id="CHEBI:57705"/>
    </ligand>
</feature>
<feature type="binding site" evidence="1">
    <location>
        <position position="100"/>
    </location>
    <ligand>
        <name>Mg(2+)</name>
        <dbReference type="ChEBI" id="CHEBI:18420"/>
    </ligand>
</feature>
<feature type="binding site" evidence="1">
    <location>
        <position position="135"/>
    </location>
    <ligand>
        <name>UDP-N-acetyl-alpha-D-glucosamine</name>
        <dbReference type="ChEBI" id="CHEBI:57705"/>
    </ligand>
</feature>
<feature type="binding site" evidence="1">
    <location>
        <position position="150"/>
    </location>
    <ligand>
        <name>UDP-N-acetyl-alpha-D-glucosamine</name>
        <dbReference type="ChEBI" id="CHEBI:57705"/>
    </ligand>
</feature>
<feature type="binding site" evidence="1">
    <location>
        <position position="165"/>
    </location>
    <ligand>
        <name>UDP-N-acetyl-alpha-D-glucosamine</name>
        <dbReference type="ChEBI" id="CHEBI:57705"/>
    </ligand>
</feature>
<feature type="binding site" evidence="1">
    <location>
        <position position="223"/>
    </location>
    <ligand>
        <name>Mg(2+)</name>
        <dbReference type="ChEBI" id="CHEBI:18420"/>
    </ligand>
</feature>
<feature type="binding site" evidence="1">
    <location>
        <position position="223"/>
    </location>
    <ligand>
        <name>UDP-N-acetyl-alpha-D-glucosamine</name>
        <dbReference type="ChEBI" id="CHEBI:57705"/>
    </ligand>
</feature>
<feature type="binding site" evidence="1">
    <location>
        <position position="329"/>
    </location>
    <ligand>
        <name>UDP-N-acetyl-alpha-D-glucosamine</name>
        <dbReference type="ChEBI" id="CHEBI:57705"/>
    </ligand>
</feature>
<feature type="binding site" evidence="1">
    <location>
        <position position="347"/>
    </location>
    <ligand>
        <name>UDP-N-acetyl-alpha-D-glucosamine</name>
        <dbReference type="ChEBI" id="CHEBI:57705"/>
    </ligand>
</feature>
<feature type="binding site" evidence="1">
    <location>
        <position position="362"/>
    </location>
    <ligand>
        <name>UDP-N-acetyl-alpha-D-glucosamine</name>
        <dbReference type="ChEBI" id="CHEBI:57705"/>
    </ligand>
</feature>
<feature type="binding site" evidence="1">
    <location>
        <position position="373"/>
    </location>
    <ligand>
        <name>UDP-N-acetyl-alpha-D-glucosamine</name>
        <dbReference type="ChEBI" id="CHEBI:57705"/>
    </ligand>
</feature>
<feature type="binding site" evidence="1">
    <location>
        <position position="376"/>
    </location>
    <ligand>
        <name>acetyl-CoA</name>
        <dbReference type="ChEBI" id="CHEBI:57288"/>
    </ligand>
</feature>
<feature type="binding site" evidence="1">
    <location>
        <begin position="382"/>
        <end position="383"/>
    </location>
    <ligand>
        <name>acetyl-CoA</name>
        <dbReference type="ChEBI" id="CHEBI:57288"/>
    </ligand>
</feature>
<feature type="binding site" evidence="1">
    <location>
        <position position="401"/>
    </location>
    <ligand>
        <name>acetyl-CoA</name>
        <dbReference type="ChEBI" id="CHEBI:57288"/>
    </ligand>
</feature>
<feature type="binding site" evidence="1">
    <location>
        <position position="419"/>
    </location>
    <ligand>
        <name>acetyl-CoA</name>
        <dbReference type="ChEBI" id="CHEBI:57288"/>
    </ligand>
</feature>
<keyword id="KW-0012">Acyltransferase</keyword>
<keyword id="KW-0133">Cell shape</keyword>
<keyword id="KW-0961">Cell wall biogenesis/degradation</keyword>
<keyword id="KW-0963">Cytoplasm</keyword>
<keyword id="KW-0460">Magnesium</keyword>
<keyword id="KW-0479">Metal-binding</keyword>
<keyword id="KW-0511">Multifunctional enzyme</keyword>
<keyword id="KW-0548">Nucleotidyltransferase</keyword>
<keyword id="KW-0573">Peptidoglycan synthesis</keyword>
<keyword id="KW-0677">Repeat</keyword>
<keyword id="KW-0808">Transferase</keyword>
<protein>
    <recommendedName>
        <fullName evidence="1">Bifunctional protein GlmU</fullName>
    </recommendedName>
    <domain>
        <recommendedName>
            <fullName evidence="1">UDP-N-acetylglucosamine pyrophosphorylase</fullName>
            <ecNumber evidence="1">2.7.7.23</ecNumber>
        </recommendedName>
        <alternativeName>
            <fullName evidence="1">N-acetylglucosamine-1-phosphate uridyltransferase</fullName>
        </alternativeName>
    </domain>
    <domain>
        <recommendedName>
            <fullName evidence="1">Glucosamine-1-phosphate N-acetyltransferase</fullName>
            <ecNumber evidence="1">2.3.1.157</ecNumber>
        </recommendedName>
    </domain>
</protein>
<reference key="1">
    <citation type="journal article" date="2010" name="Genome Biol. Evol.">
        <title>Continuing evolution of Burkholderia mallei through genome reduction and large-scale rearrangements.</title>
        <authorList>
            <person name="Losada L."/>
            <person name="Ronning C.M."/>
            <person name="DeShazer D."/>
            <person name="Woods D."/>
            <person name="Fedorova N."/>
            <person name="Kim H.S."/>
            <person name="Shabalina S.A."/>
            <person name="Pearson T.R."/>
            <person name="Brinkac L."/>
            <person name="Tan P."/>
            <person name="Nandi T."/>
            <person name="Crabtree J."/>
            <person name="Badger J."/>
            <person name="Beckstrom-Sternberg S."/>
            <person name="Saqib M."/>
            <person name="Schutzer S.E."/>
            <person name="Keim P."/>
            <person name="Nierman W.C."/>
        </authorList>
    </citation>
    <scope>NUCLEOTIDE SEQUENCE [LARGE SCALE GENOMIC DNA]</scope>
    <source>
        <strain>668</strain>
    </source>
</reference>